<feature type="chain" id="PRO_1000202982" description="Deoxyuridine 5'-triphosphate nucleotidohydrolase">
    <location>
        <begin position="1"/>
        <end position="151"/>
    </location>
</feature>
<feature type="binding site" evidence="1">
    <location>
        <begin position="70"/>
        <end position="72"/>
    </location>
    <ligand>
        <name>substrate</name>
    </ligand>
</feature>
<feature type="binding site" evidence="1">
    <location>
        <position position="83"/>
    </location>
    <ligand>
        <name>substrate</name>
    </ligand>
</feature>
<feature type="binding site" evidence="1">
    <location>
        <begin position="87"/>
        <end position="89"/>
    </location>
    <ligand>
        <name>substrate</name>
    </ligand>
</feature>
<feature type="binding site" evidence="1">
    <location>
        <position position="97"/>
    </location>
    <ligand>
        <name>substrate</name>
    </ligand>
</feature>
<comment type="function">
    <text evidence="1">This enzyme is involved in nucleotide metabolism: it produces dUMP, the immediate precursor of thymidine nucleotides and it decreases the intracellular concentration of dUTP so that uracil cannot be incorporated into DNA.</text>
</comment>
<comment type="catalytic activity">
    <reaction evidence="1">
        <text>dUTP + H2O = dUMP + diphosphate + H(+)</text>
        <dbReference type="Rhea" id="RHEA:10248"/>
        <dbReference type="ChEBI" id="CHEBI:15377"/>
        <dbReference type="ChEBI" id="CHEBI:15378"/>
        <dbReference type="ChEBI" id="CHEBI:33019"/>
        <dbReference type="ChEBI" id="CHEBI:61555"/>
        <dbReference type="ChEBI" id="CHEBI:246422"/>
        <dbReference type="EC" id="3.6.1.23"/>
    </reaction>
</comment>
<comment type="cofactor">
    <cofactor evidence="1">
        <name>Mg(2+)</name>
        <dbReference type="ChEBI" id="CHEBI:18420"/>
    </cofactor>
</comment>
<comment type="pathway">
    <text evidence="1">Pyrimidine metabolism; dUMP biosynthesis; dUMP from dCTP (dUTP route): step 2/2.</text>
</comment>
<comment type="subunit">
    <text evidence="1">Homotrimer.</text>
</comment>
<comment type="similarity">
    <text evidence="1">Belongs to the dUTPase family.</text>
</comment>
<gene>
    <name evidence="1" type="primary">dut</name>
    <name type="ordered locus">BWG_3331</name>
</gene>
<reference key="1">
    <citation type="journal article" date="2009" name="J. Bacteriol.">
        <title>Genomic sequencing reveals regulatory mutations and recombinational events in the widely used MC4100 lineage of Escherichia coli K-12.</title>
        <authorList>
            <person name="Ferenci T."/>
            <person name="Zhou Z."/>
            <person name="Betteridge T."/>
            <person name="Ren Y."/>
            <person name="Liu Y."/>
            <person name="Feng L."/>
            <person name="Reeves P.R."/>
            <person name="Wang L."/>
        </authorList>
    </citation>
    <scope>NUCLEOTIDE SEQUENCE [LARGE SCALE GENOMIC DNA]</scope>
    <source>
        <strain>K12 / MC4100 / BW2952</strain>
    </source>
</reference>
<evidence type="ECO:0000255" key="1">
    <source>
        <dbReference type="HAMAP-Rule" id="MF_00116"/>
    </source>
</evidence>
<name>DUT_ECOBW</name>
<accession>C4ZXN2</accession>
<organism>
    <name type="scientific">Escherichia coli (strain K12 / MC4100 / BW2952)</name>
    <dbReference type="NCBI Taxonomy" id="595496"/>
    <lineage>
        <taxon>Bacteria</taxon>
        <taxon>Pseudomonadati</taxon>
        <taxon>Pseudomonadota</taxon>
        <taxon>Gammaproteobacteria</taxon>
        <taxon>Enterobacterales</taxon>
        <taxon>Enterobacteriaceae</taxon>
        <taxon>Escherichia</taxon>
    </lineage>
</organism>
<protein>
    <recommendedName>
        <fullName evidence="1">Deoxyuridine 5'-triphosphate nucleotidohydrolase</fullName>
        <shortName evidence="1">dUTPase</shortName>
        <ecNumber evidence="1">3.6.1.23</ecNumber>
    </recommendedName>
    <alternativeName>
        <fullName evidence="1">dUTP pyrophosphatase</fullName>
    </alternativeName>
</protein>
<proteinExistence type="inferred from homology"/>
<dbReference type="EC" id="3.6.1.23" evidence="1"/>
<dbReference type="EMBL" id="CP001396">
    <property type="protein sequence ID" value="ACR62746.1"/>
    <property type="molecule type" value="Genomic_DNA"/>
</dbReference>
<dbReference type="SMR" id="C4ZXN2"/>
<dbReference type="KEGG" id="ebw:BWG_3331"/>
<dbReference type="HOGENOM" id="CLU_068508_1_1_6"/>
<dbReference type="UniPathway" id="UPA00610">
    <property type="reaction ID" value="UER00666"/>
</dbReference>
<dbReference type="GO" id="GO:0004170">
    <property type="term" value="F:dUTP diphosphatase activity"/>
    <property type="evidence" value="ECO:0007669"/>
    <property type="project" value="UniProtKB-UniRule"/>
</dbReference>
<dbReference type="GO" id="GO:0000287">
    <property type="term" value="F:magnesium ion binding"/>
    <property type="evidence" value="ECO:0007669"/>
    <property type="project" value="UniProtKB-UniRule"/>
</dbReference>
<dbReference type="GO" id="GO:0006226">
    <property type="term" value="P:dUMP biosynthetic process"/>
    <property type="evidence" value="ECO:0007669"/>
    <property type="project" value="UniProtKB-UniRule"/>
</dbReference>
<dbReference type="GO" id="GO:0046081">
    <property type="term" value="P:dUTP catabolic process"/>
    <property type="evidence" value="ECO:0007669"/>
    <property type="project" value="InterPro"/>
</dbReference>
<dbReference type="CDD" id="cd07557">
    <property type="entry name" value="trimeric_dUTPase"/>
    <property type="match status" value="1"/>
</dbReference>
<dbReference type="FunFam" id="2.70.40.10:FF:000002">
    <property type="entry name" value="dUTP diphosphatase"/>
    <property type="match status" value="1"/>
</dbReference>
<dbReference type="Gene3D" id="2.70.40.10">
    <property type="match status" value="1"/>
</dbReference>
<dbReference type="HAMAP" id="MF_00116">
    <property type="entry name" value="dUTPase_bact"/>
    <property type="match status" value="1"/>
</dbReference>
<dbReference type="InterPro" id="IPR008181">
    <property type="entry name" value="dUTPase"/>
</dbReference>
<dbReference type="InterPro" id="IPR029054">
    <property type="entry name" value="dUTPase-like"/>
</dbReference>
<dbReference type="InterPro" id="IPR036157">
    <property type="entry name" value="dUTPase-like_sf"/>
</dbReference>
<dbReference type="InterPro" id="IPR033704">
    <property type="entry name" value="dUTPase_trimeric"/>
</dbReference>
<dbReference type="NCBIfam" id="TIGR00576">
    <property type="entry name" value="dut"/>
    <property type="match status" value="1"/>
</dbReference>
<dbReference type="NCBIfam" id="NF001862">
    <property type="entry name" value="PRK00601.1"/>
    <property type="match status" value="1"/>
</dbReference>
<dbReference type="PANTHER" id="PTHR11241">
    <property type="entry name" value="DEOXYURIDINE 5'-TRIPHOSPHATE NUCLEOTIDOHYDROLASE"/>
    <property type="match status" value="1"/>
</dbReference>
<dbReference type="PANTHER" id="PTHR11241:SF0">
    <property type="entry name" value="DEOXYURIDINE 5'-TRIPHOSPHATE NUCLEOTIDOHYDROLASE"/>
    <property type="match status" value="1"/>
</dbReference>
<dbReference type="Pfam" id="PF00692">
    <property type="entry name" value="dUTPase"/>
    <property type="match status" value="1"/>
</dbReference>
<dbReference type="SUPFAM" id="SSF51283">
    <property type="entry name" value="dUTPase-like"/>
    <property type="match status" value="1"/>
</dbReference>
<sequence length="151" mass="16155">MKKIDVKILDPRVGKEFPLPTYATSGSAGLDLRACLNDAVELAPGDTTLVPTGLAIHIADPSLAAMMLPRSGLGHKHGIVLGNLVGLIDSDYQGQLMISVWNRGQDSFTIQPGERIAQMIFVPVVQAEFNLVEDFDATDRGEGGFGHSGRQ</sequence>
<keyword id="KW-0378">Hydrolase</keyword>
<keyword id="KW-0460">Magnesium</keyword>
<keyword id="KW-0479">Metal-binding</keyword>
<keyword id="KW-0546">Nucleotide metabolism</keyword>